<name>KDSA_RICCN</name>
<gene>
    <name evidence="1" type="primary">kdsA</name>
    <name type="ordered locus">RC0090</name>
</gene>
<accession>Q92JH7</accession>
<evidence type="ECO:0000255" key="1">
    <source>
        <dbReference type="HAMAP-Rule" id="MF_00056"/>
    </source>
</evidence>
<sequence length="274" mass="30030">MQKVVKLNNIKIGNDLPFVLITGPCQIEGKDHALFMAEKLVKLTSKLEIPFIYKSSFDKANRTSVHGIRGVGIEKGLEILSKVKSEFDCPIVTDVHSESQCTETAEVADILQIPAFLCRQTDLLQAAAKTGKIVKVKKGQFLAPWDMKNVQTKLEAFGVKDILFTERGACFGYNNLVSDMRSLAIMAELNVPVVFDATHSVQQPGGLGGSTGGERKYVELLAKAATSVGIAGIYMEVHQDPDNAPSDGPCMMKLDNLESILIKLKKYDKITKEK</sequence>
<dbReference type="EC" id="2.5.1.55" evidence="1"/>
<dbReference type="EMBL" id="AE006914">
    <property type="protein sequence ID" value="AAL02628.1"/>
    <property type="molecule type" value="Genomic_DNA"/>
</dbReference>
<dbReference type="PIR" id="B97711">
    <property type="entry name" value="B97711"/>
</dbReference>
<dbReference type="RefSeq" id="WP_010976774.1">
    <property type="nucleotide sequence ID" value="NC_003103.1"/>
</dbReference>
<dbReference type="SMR" id="Q92JH7"/>
<dbReference type="GeneID" id="928110"/>
<dbReference type="KEGG" id="rco:RC0090"/>
<dbReference type="PATRIC" id="fig|272944.4.peg.107"/>
<dbReference type="HOGENOM" id="CLU_036666_0_0_5"/>
<dbReference type="UniPathway" id="UPA00030"/>
<dbReference type="UniPathway" id="UPA00357">
    <property type="reaction ID" value="UER00474"/>
</dbReference>
<dbReference type="Proteomes" id="UP000000816">
    <property type="component" value="Chromosome"/>
</dbReference>
<dbReference type="GO" id="GO:0005737">
    <property type="term" value="C:cytoplasm"/>
    <property type="evidence" value="ECO:0007669"/>
    <property type="project" value="UniProtKB-SubCell"/>
</dbReference>
<dbReference type="GO" id="GO:0008676">
    <property type="term" value="F:3-deoxy-8-phosphooctulonate synthase activity"/>
    <property type="evidence" value="ECO:0007669"/>
    <property type="project" value="UniProtKB-UniRule"/>
</dbReference>
<dbReference type="GO" id="GO:0019294">
    <property type="term" value="P:keto-3-deoxy-D-manno-octulosonic acid biosynthetic process"/>
    <property type="evidence" value="ECO:0007669"/>
    <property type="project" value="UniProtKB-UniRule"/>
</dbReference>
<dbReference type="Gene3D" id="3.20.20.70">
    <property type="entry name" value="Aldolase class I"/>
    <property type="match status" value="1"/>
</dbReference>
<dbReference type="HAMAP" id="MF_00056">
    <property type="entry name" value="KDO8P_synth"/>
    <property type="match status" value="1"/>
</dbReference>
<dbReference type="InterPro" id="IPR013785">
    <property type="entry name" value="Aldolase_TIM"/>
</dbReference>
<dbReference type="InterPro" id="IPR006218">
    <property type="entry name" value="DAHP1/KDSA"/>
</dbReference>
<dbReference type="InterPro" id="IPR006269">
    <property type="entry name" value="KDO8P_synthase"/>
</dbReference>
<dbReference type="NCBIfam" id="TIGR01362">
    <property type="entry name" value="KDO8P_synth"/>
    <property type="match status" value="1"/>
</dbReference>
<dbReference type="NCBIfam" id="NF003543">
    <property type="entry name" value="PRK05198.1"/>
    <property type="match status" value="1"/>
</dbReference>
<dbReference type="PANTHER" id="PTHR21057">
    <property type="entry name" value="PHOSPHO-2-DEHYDRO-3-DEOXYHEPTONATE ALDOLASE"/>
    <property type="match status" value="1"/>
</dbReference>
<dbReference type="Pfam" id="PF00793">
    <property type="entry name" value="DAHP_synth_1"/>
    <property type="match status" value="1"/>
</dbReference>
<dbReference type="SUPFAM" id="SSF51569">
    <property type="entry name" value="Aldolase"/>
    <property type="match status" value="1"/>
</dbReference>
<proteinExistence type="inferred from homology"/>
<feature type="chain" id="PRO_0000187159" description="2-dehydro-3-deoxyphosphooctonate aldolase">
    <location>
        <begin position="1"/>
        <end position="274"/>
    </location>
</feature>
<organism>
    <name type="scientific">Rickettsia conorii (strain ATCC VR-613 / Malish 7)</name>
    <dbReference type="NCBI Taxonomy" id="272944"/>
    <lineage>
        <taxon>Bacteria</taxon>
        <taxon>Pseudomonadati</taxon>
        <taxon>Pseudomonadota</taxon>
        <taxon>Alphaproteobacteria</taxon>
        <taxon>Rickettsiales</taxon>
        <taxon>Rickettsiaceae</taxon>
        <taxon>Rickettsieae</taxon>
        <taxon>Rickettsia</taxon>
        <taxon>spotted fever group</taxon>
    </lineage>
</organism>
<protein>
    <recommendedName>
        <fullName evidence="1">2-dehydro-3-deoxyphosphooctonate aldolase</fullName>
        <ecNumber evidence="1">2.5.1.55</ecNumber>
    </recommendedName>
    <alternativeName>
        <fullName evidence="1">3-deoxy-D-manno-octulosonic acid 8-phosphate synthase</fullName>
    </alternativeName>
    <alternativeName>
        <fullName evidence="1">KDO-8-phosphate synthase</fullName>
        <shortName evidence="1">KDO 8-P synthase</shortName>
        <shortName evidence="1">KDOPS</shortName>
    </alternativeName>
    <alternativeName>
        <fullName evidence="1">Phospho-2-dehydro-3-deoxyoctonate aldolase</fullName>
    </alternativeName>
</protein>
<reference key="1">
    <citation type="journal article" date="2001" name="Science">
        <title>Mechanisms of evolution in Rickettsia conorii and R. prowazekii.</title>
        <authorList>
            <person name="Ogata H."/>
            <person name="Audic S."/>
            <person name="Renesto-Audiffren P."/>
            <person name="Fournier P.-E."/>
            <person name="Barbe V."/>
            <person name="Samson D."/>
            <person name="Roux V."/>
            <person name="Cossart P."/>
            <person name="Weissenbach J."/>
            <person name="Claverie J.-M."/>
            <person name="Raoult D."/>
        </authorList>
    </citation>
    <scope>NUCLEOTIDE SEQUENCE [LARGE SCALE GENOMIC DNA]</scope>
    <source>
        <strain>ATCC VR-613 / Malish 7</strain>
    </source>
</reference>
<keyword id="KW-0963">Cytoplasm</keyword>
<keyword id="KW-0448">Lipopolysaccharide biosynthesis</keyword>
<keyword id="KW-0808">Transferase</keyword>
<comment type="catalytic activity">
    <reaction evidence="1">
        <text>D-arabinose 5-phosphate + phosphoenolpyruvate + H2O = 3-deoxy-alpha-D-manno-2-octulosonate-8-phosphate + phosphate</text>
        <dbReference type="Rhea" id="RHEA:14053"/>
        <dbReference type="ChEBI" id="CHEBI:15377"/>
        <dbReference type="ChEBI" id="CHEBI:43474"/>
        <dbReference type="ChEBI" id="CHEBI:57693"/>
        <dbReference type="ChEBI" id="CHEBI:58702"/>
        <dbReference type="ChEBI" id="CHEBI:85985"/>
        <dbReference type="EC" id="2.5.1.55"/>
    </reaction>
</comment>
<comment type="pathway">
    <text evidence="1">Carbohydrate biosynthesis; 3-deoxy-D-manno-octulosonate biosynthesis; 3-deoxy-D-manno-octulosonate from D-ribulose 5-phosphate: step 2/3.</text>
</comment>
<comment type="pathway">
    <text evidence="1">Bacterial outer membrane biogenesis; lipopolysaccharide biosynthesis.</text>
</comment>
<comment type="subcellular location">
    <subcellularLocation>
        <location evidence="1">Cytoplasm</location>
    </subcellularLocation>
</comment>
<comment type="similarity">
    <text evidence="1">Belongs to the KdsA family.</text>
</comment>